<dbReference type="EC" id="3.1.-.-" evidence="1"/>
<dbReference type="EMBL" id="CP000230">
    <property type="protein sequence ID" value="ABC21635.1"/>
    <property type="molecule type" value="Genomic_DNA"/>
</dbReference>
<dbReference type="RefSeq" id="YP_425922.1">
    <property type="nucleotide sequence ID" value="NC_007643.1"/>
</dbReference>
<dbReference type="SMR" id="Q2RW60"/>
<dbReference type="STRING" id="269796.Rru_A0834"/>
<dbReference type="EnsemblBacteria" id="ABC21635">
    <property type="protein sequence ID" value="ABC21635"/>
    <property type="gene ID" value="Rru_A0834"/>
</dbReference>
<dbReference type="KEGG" id="rru:Rru_A0834"/>
<dbReference type="PATRIC" id="fig|269796.9.peg.887"/>
<dbReference type="eggNOG" id="COG1343">
    <property type="taxonomic scope" value="Bacteria"/>
</dbReference>
<dbReference type="HOGENOM" id="CLU_161124_3_1_5"/>
<dbReference type="PhylomeDB" id="Q2RW60"/>
<dbReference type="Proteomes" id="UP000001929">
    <property type="component" value="Chromosome"/>
</dbReference>
<dbReference type="GO" id="GO:0046872">
    <property type="term" value="F:metal ion binding"/>
    <property type="evidence" value="ECO:0007669"/>
    <property type="project" value="UniProtKB-UniRule"/>
</dbReference>
<dbReference type="GO" id="GO:0004521">
    <property type="term" value="F:RNA endonuclease activity"/>
    <property type="evidence" value="ECO:0007669"/>
    <property type="project" value="InterPro"/>
</dbReference>
<dbReference type="GO" id="GO:0051607">
    <property type="term" value="P:defense response to virus"/>
    <property type="evidence" value="ECO:0007669"/>
    <property type="project" value="UniProtKB-UniRule"/>
</dbReference>
<dbReference type="GO" id="GO:0043571">
    <property type="term" value="P:maintenance of CRISPR repeat elements"/>
    <property type="evidence" value="ECO:0007669"/>
    <property type="project" value="UniProtKB-UniRule"/>
</dbReference>
<dbReference type="CDD" id="cd09725">
    <property type="entry name" value="Cas2_I_II_III"/>
    <property type="match status" value="1"/>
</dbReference>
<dbReference type="Gene3D" id="3.30.70.240">
    <property type="match status" value="1"/>
</dbReference>
<dbReference type="HAMAP" id="MF_01471">
    <property type="entry name" value="Cas2"/>
    <property type="match status" value="1"/>
</dbReference>
<dbReference type="InterPro" id="IPR021127">
    <property type="entry name" value="CRISPR_associated_Cas2"/>
</dbReference>
<dbReference type="InterPro" id="IPR019199">
    <property type="entry name" value="Virulence_VapD/CRISPR_Cas2"/>
</dbReference>
<dbReference type="NCBIfam" id="TIGR01573">
    <property type="entry name" value="cas2"/>
    <property type="match status" value="1"/>
</dbReference>
<dbReference type="PANTHER" id="PTHR34405">
    <property type="entry name" value="CRISPR-ASSOCIATED ENDORIBONUCLEASE CAS2"/>
    <property type="match status" value="1"/>
</dbReference>
<dbReference type="PANTHER" id="PTHR34405:SF3">
    <property type="entry name" value="CRISPR-ASSOCIATED ENDORIBONUCLEASE CAS2 3"/>
    <property type="match status" value="1"/>
</dbReference>
<dbReference type="Pfam" id="PF09827">
    <property type="entry name" value="CRISPR_Cas2"/>
    <property type="match status" value="1"/>
</dbReference>
<dbReference type="PIRSF" id="PIRSF032582">
    <property type="entry name" value="Cas2"/>
    <property type="match status" value="1"/>
</dbReference>
<dbReference type="SUPFAM" id="SSF143430">
    <property type="entry name" value="TTP0101/SSO1404-like"/>
    <property type="match status" value="1"/>
</dbReference>
<organism>
    <name type="scientific">Rhodospirillum rubrum (strain ATCC 11170 / ATH 1.1.1 / DSM 467 / LMG 4362 / NCIMB 8255 / S1)</name>
    <dbReference type="NCBI Taxonomy" id="269796"/>
    <lineage>
        <taxon>Bacteria</taxon>
        <taxon>Pseudomonadati</taxon>
        <taxon>Pseudomonadota</taxon>
        <taxon>Alphaproteobacteria</taxon>
        <taxon>Rhodospirillales</taxon>
        <taxon>Rhodospirillaceae</taxon>
        <taxon>Rhodospirillum</taxon>
    </lineage>
</organism>
<gene>
    <name evidence="1" type="primary">cas2-3</name>
    <name type="ordered locus">Rru_A0834</name>
</gene>
<accession>Q2RW60</accession>
<comment type="function">
    <text evidence="1">CRISPR (clustered regularly interspaced short palindromic repeat), is an adaptive immune system that provides protection against mobile genetic elements (viruses, transposable elements and conjugative plasmids). CRISPR clusters contain sequences complementary to antecedent mobile elements and target invading nucleic acids. CRISPR clusters are transcribed and processed into CRISPR RNA (crRNA). Functions as a ssRNA-specific endoribonuclease. Involved in the integration of spacer DNA into the CRISPR cassette.</text>
</comment>
<comment type="cofactor">
    <cofactor evidence="1">
        <name>Mg(2+)</name>
        <dbReference type="ChEBI" id="CHEBI:18420"/>
    </cofactor>
</comment>
<comment type="subunit">
    <text evidence="1">Homodimer, forms a heterotetramer with a Cas1 homodimer.</text>
</comment>
<comment type="similarity">
    <text evidence="1">Belongs to the CRISPR-associated endoribonuclease Cas2 protein family.</text>
</comment>
<protein>
    <recommendedName>
        <fullName evidence="1">CRISPR-associated endoribonuclease Cas2 3</fullName>
        <ecNumber evidence="1">3.1.-.-</ecNumber>
    </recommendedName>
</protein>
<reference key="1">
    <citation type="journal article" date="2011" name="Stand. Genomic Sci.">
        <title>Complete genome sequence of Rhodospirillum rubrum type strain (S1).</title>
        <authorList>
            <person name="Munk A.C."/>
            <person name="Copeland A."/>
            <person name="Lucas S."/>
            <person name="Lapidus A."/>
            <person name="Del Rio T.G."/>
            <person name="Barry K."/>
            <person name="Detter J.C."/>
            <person name="Hammon N."/>
            <person name="Israni S."/>
            <person name="Pitluck S."/>
            <person name="Brettin T."/>
            <person name="Bruce D."/>
            <person name="Han C."/>
            <person name="Tapia R."/>
            <person name="Gilna P."/>
            <person name="Schmutz J."/>
            <person name="Larimer F."/>
            <person name="Land M."/>
            <person name="Kyrpides N.C."/>
            <person name="Mavromatis K."/>
            <person name="Richardson P."/>
            <person name="Rohde M."/>
            <person name="Goeker M."/>
            <person name="Klenk H.P."/>
            <person name="Zhang Y."/>
            <person name="Roberts G.P."/>
            <person name="Reslewic S."/>
            <person name="Schwartz D.C."/>
        </authorList>
    </citation>
    <scope>NUCLEOTIDE SEQUENCE [LARGE SCALE GENOMIC DNA]</scope>
    <source>
        <strain>ATCC 11170 / ATH 1.1.1 / DSM 467 / LMG 4362 / NCIMB 8255 / S1</strain>
    </source>
</reference>
<keyword id="KW-0051">Antiviral defense</keyword>
<keyword id="KW-0255">Endonuclease</keyword>
<keyword id="KW-0378">Hydrolase</keyword>
<keyword id="KW-0460">Magnesium</keyword>
<keyword id="KW-0479">Metal-binding</keyword>
<keyword id="KW-0540">Nuclease</keyword>
<keyword id="KW-1185">Reference proteome</keyword>
<sequence>MILVTYDVNTVEPGGRRRLRQVAKACQDYGQRVQNSVFEVEVDPARWVALKARLEAIIDPALDSLRYYDLGANWQRRVDHVGAKPAVDLHGPLIL</sequence>
<name>CAS2C_RHORT</name>
<evidence type="ECO:0000255" key="1">
    <source>
        <dbReference type="HAMAP-Rule" id="MF_01471"/>
    </source>
</evidence>
<proteinExistence type="inferred from homology"/>
<feature type="chain" id="PRO_0000417727" description="CRISPR-associated endoribonuclease Cas2 3">
    <location>
        <begin position="1"/>
        <end position="95"/>
    </location>
</feature>
<feature type="binding site" evidence="1">
    <location>
        <position position="7"/>
    </location>
    <ligand>
        <name>Mg(2+)</name>
        <dbReference type="ChEBI" id="CHEBI:18420"/>
        <note>catalytic</note>
    </ligand>
</feature>